<sequence>MSQLLQQLGTDNEFIRRHNGPASSQHQHMLNTVGAETLEKLIEETVPSSIRLPQPMQLPHGLSENAMLAELKQIAQQNTLNTSYIGQGYYNTHTPNVILRNVFENPGWYTAYTPYQPEISQGRLEALLNYQQMVMDLTGLDIANASLLDEATAAAEAMTLCKRGGKNKSSTFFVADDVHPQTLAVIKTRAKFIGFDVVVDTDSNLDSHDVFGALLQYPGTTGEVKDLTTLIEQAHAKKTLVVVATDLLASVLLKPVGEMGADIAIGSAQRFGVPMGYGGPHAAFMATREKLKRSMPGRVIGVSIDSKGNQALRMAMQTREQHIRREKATSNICTAQALLANMASFYAVYHGPEGLKTIARRVHHFTAIVAKSLQSAGFELAHQHFFDTLTVKTEQQTDILYTKALAASINLRKFDTELGISFDETTTVSDLVALLAVFGVDNAECDSLSNDIGQDEFAAIPEACRRTSSFLTHPVFNTHHSETQMLRYLKKLENKDFSLTHGMIPLGSCTMKLNAVAEMLPVTWPEFGGIHPFAPLNQAAGYTTLATSLKSMLCEITGYDDFSLQPNSGASGEYAGLIAIQRYHESRNEGHRNVCLIPSSAHGTNPATASMVSMKVVVVKCDDNGNIDMIDLAEKIAKHQENLSSIMITYPSTHGVYEEQVREVCDMVHDAGGQVYLDGANMNAQVGLTSPGFIGSDVSHLNLHKTFCIPHGGGGPGMGPIGVKSHLAPFLPGHSENGVQGSDYAVSAADLGSASILPISWAYIAMMGEMGLTEATKVAILNANYVMDRLRPHYPVLYRGTNGRIAHECIIDIRPLKEATGISEEDIAKRLMDFGFHAPTMSFPVAGTLMIEPTESEDLAELDRFCEAMIAIREEMNKVQQGEWPLDNNPLVNAPHTQVDLMSNEWDHPYTREVACFPSVQAKASKYWPTVNRVDNVYGDRNLICSCPSIDSYEE</sequence>
<keyword id="KW-0560">Oxidoreductase</keyword>
<keyword id="KW-0663">Pyridoxal phosphate</keyword>
<evidence type="ECO:0000255" key="1">
    <source>
        <dbReference type="HAMAP-Rule" id="MF_00711"/>
    </source>
</evidence>
<gene>
    <name evidence="1" type="primary">gcvP</name>
    <name type="ordered locus">VSAL_II0765</name>
</gene>
<reference key="1">
    <citation type="journal article" date="2008" name="BMC Genomics">
        <title>The genome sequence of the fish pathogen Aliivibrio salmonicida strain LFI1238 shows extensive evidence of gene decay.</title>
        <authorList>
            <person name="Hjerde E."/>
            <person name="Lorentzen M.S."/>
            <person name="Holden M.T."/>
            <person name="Seeger K."/>
            <person name="Paulsen S."/>
            <person name="Bason N."/>
            <person name="Churcher C."/>
            <person name="Harris D."/>
            <person name="Norbertczak H."/>
            <person name="Quail M.A."/>
            <person name="Sanders S."/>
            <person name="Thurston S."/>
            <person name="Parkhill J."/>
            <person name="Willassen N.P."/>
            <person name="Thomson N.R."/>
        </authorList>
    </citation>
    <scope>NUCLEOTIDE SEQUENCE [LARGE SCALE GENOMIC DNA]</scope>
    <source>
        <strain>LFI1238</strain>
    </source>
</reference>
<proteinExistence type="inferred from homology"/>
<dbReference type="EC" id="1.4.4.2" evidence="1"/>
<dbReference type="EMBL" id="FM178380">
    <property type="protein sequence ID" value="CAQ81519.1"/>
    <property type="molecule type" value="Genomic_DNA"/>
</dbReference>
<dbReference type="RefSeq" id="WP_012552059.1">
    <property type="nucleotide sequence ID" value="NC_011313.1"/>
</dbReference>
<dbReference type="SMR" id="B6ES35"/>
<dbReference type="KEGG" id="vsa:VSAL_II0765"/>
<dbReference type="eggNOG" id="COG0403">
    <property type="taxonomic scope" value="Bacteria"/>
</dbReference>
<dbReference type="eggNOG" id="COG1003">
    <property type="taxonomic scope" value="Bacteria"/>
</dbReference>
<dbReference type="HOGENOM" id="CLU_004620_1_1_6"/>
<dbReference type="Proteomes" id="UP000001730">
    <property type="component" value="Chromosome 2"/>
</dbReference>
<dbReference type="GO" id="GO:0005829">
    <property type="term" value="C:cytosol"/>
    <property type="evidence" value="ECO:0007669"/>
    <property type="project" value="TreeGrafter"/>
</dbReference>
<dbReference type="GO" id="GO:0005960">
    <property type="term" value="C:glycine cleavage complex"/>
    <property type="evidence" value="ECO:0007669"/>
    <property type="project" value="TreeGrafter"/>
</dbReference>
<dbReference type="GO" id="GO:0016594">
    <property type="term" value="F:glycine binding"/>
    <property type="evidence" value="ECO:0007669"/>
    <property type="project" value="TreeGrafter"/>
</dbReference>
<dbReference type="GO" id="GO:0004375">
    <property type="term" value="F:glycine dehydrogenase (decarboxylating) activity"/>
    <property type="evidence" value="ECO:0007669"/>
    <property type="project" value="UniProtKB-EC"/>
</dbReference>
<dbReference type="GO" id="GO:0030170">
    <property type="term" value="F:pyridoxal phosphate binding"/>
    <property type="evidence" value="ECO:0007669"/>
    <property type="project" value="TreeGrafter"/>
</dbReference>
<dbReference type="GO" id="GO:0019464">
    <property type="term" value="P:glycine decarboxylation via glycine cleavage system"/>
    <property type="evidence" value="ECO:0007669"/>
    <property type="project" value="UniProtKB-UniRule"/>
</dbReference>
<dbReference type="CDD" id="cd00613">
    <property type="entry name" value="GDC-P"/>
    <property type="match status" value="2"/>
</dbReference>
<dbReference type="FunFam" id="3.40.640.10:FF:000005">
    <property type="entry name" value="Glycine dehydrogenase (decarboxylating), mitochondrial"/>
    <property type="match status" value="1"/>
</dbReference>
<dbReference type="FunFam" id="3.90.1150.10:FF:000007">
    <property type="entry name" value="Glycine dehydrogenase (decarboxylating), mitochondrial"/>
    <property type="match status" value="1"/>
</dbReference>
<dbReference type="FunFam" id="3.40.640.10:FF:000007">
    <property type="entry name" value="glycine dehydrogenase (Decarboxylating), mitochondrial"/>
    <property type="match status" value="1"/>
</dbReference>
<dbReference type="Gene3D" id="3.90.1150.10">
    <property type="entry name" value="Aspartate Aminotransferase, domain 1"/>
    <property type="match status" value="2"/>
</dbReference>
<dbReference type="Gene3D" id="3.40.640.10">
    <property type="entry name" value="Type I PLP-dependent aspartate aminotransferase-like (Major domain)"/>
    <property type="match status" value="2"/>
</dbReference>
<dbReference type="HAMAP" id="MF_00711">
    <property type="entry name" value="GcvP"/>
    <property type="match status" value="1"/>
</dbReference>
<dbReference type="InterPro" id="IPR003437">
    <property type="entry name" value="GcvP"/>
</dbReference>
<dbReference type="InterPro" id="IPR049316">
    <property type="entry name" value="GDC-P_C"/>
</dbReference>
<dbReference type="InterPro" id="IPR049315">
    <property type="entry name" value="GDC-P_N"/>
</dbReference>
<dbReference type="InterPro" id="IPR020581">
    <property type="entry name" value="GDC_P"/>
</dbReference>
<dbReference type="InterPro" id="IPR015424">
    <property type="entry name" value="PyrdxlP-dep_Trfase"/>
</dbReference>
<dbReference type="InterPro" id="IPR015421">
    <property type="entry name" value="PyrdxlP-dep_Trfase_major"/>
</dbReference>
<dbReference type="InterPro" id="IPR015422">
    <property type="entry name" value="PyrdxlP-dep_Trfase_small"/>
</dbReference>
<dbReference type="NCBIfam" id="TIGR00461">
    <property type="entry name" value="gcvP"/>
    <property type="match status" value="1"/>
</dbReference>
<dbReference type="PANTHER" id="PTHR11773:SF13">
    <property type="entry name" value="GLYCINE DEHYDROGENASE (DECARBOXYLATING)"/>
    <property type="match status" value="1"/>
</dbReference>
<dbReference type="PANTHER" id="PTHR11773">
    <property type="entry name" value="GLYCINE DEHYDROGENASE, DECARBOXYLATING"/>
    <property type="match status" value="1"/>
</dbReference>
<dbReference type="Pfam" id="PF21478">
    <property type="entry name" value="GcvP2_C"/>
    <property type="match status" value="1"/>
</dbReference>
<dbReference type="Pfam" id="PF02347">
    <property type="entry name" value="GDC-P"/>
    <property type="match status" value="2"/>
</dbReference>
<dbReference type="SUPFAM" id="SSF53383">
    <property type="entry name" value="PLP-dependent transferases"/>
    <property type="match status" value="2"/>
</dbReference>
<feature type="chain" id="PRO_1000190204" description="Glycine dehydrogenase (decarboxylating)">
    <location>
        <begin position="1"/>
        <end position="955"/>
    </location>
</feature>
<feature type="modified residue" description="N6-(pyridoxal phosphate)lysine" evidence="1">
    <location>
        <position position="705"/>
    </location>
</feature>
<name>GCSP_ALISL</name>
<accession>B6ES35</accession>
<organism>
    <name type="scientific">Aliivibrio salmonicida (strain LFI1238)</name>
    <name type="common">Vibrio salmonicida (strain LFI1238)</name>
    <dbReference type="NCBI Taxonomy" id="316275"/>
    <lineage>
        <taxon>Bacteria</taxon>
        <taxon>Pseudomonadati</taxon>
        <taxon>Pseudomonadota</taxon>
        <taxon>Gammaproteobacteria</taxon>
        <taxon>Vibrionales</taxon>
        <taxon>Vibrionaceae</taxon>
        <taxon>Aliivibrio</taxon>
    </lineage>
</organism>
<protein>
    <recommendedName>
        <fullName evidence="1">Glycine dehydrogenase (decarboxylating)</fullName>
        <ecNumber evidence="1">1.4.4.2</ecNumber>
    </recommendedName>
    <alternativeName>
        <fullName evidence="1">Glycine cleavage system P-protein</fullName>
    </alternativeName>
    <alternativeName>
        <fullName evidence="1">Glycine decarboxylase</fullName>
    </alternativeName>
    <alternativeName>
        <fullName evidence="1">Glycine dehydrogenase (aminomethyl-transferring)</fullName>
    </alternativeName>
</protein>
<comment type="function">
    <text evidence="1">The glycine cleavage system catalyzes the degradation of glycine. The P protein binds the alpha-amino group of glycine through its pyridoxal phosphate cofactor; CO(2) is released and the remaining methylamine moiety is then transferred to the lipoamide cofactor of the H protein.</text>
</comment>
<comment type="catalytic activity">
    <reaction evidence="1">
        <text>N(6)-[(R)-lipoyl]-L-lysyl-[glycine-cleavage complex H protein] + glycine + H(+) = N(6)-[(R)-S(8)-aminomethyldihydrolipoyl]-L-lysyl-[glycine-cleavage complex H protein] + CO2</text>
        <dbReference type="Rhea" id="RHEA:24304"/>
        <dbReference type="Rhea" id="RHEA-COMP:10494"/>
        <dbReference type="Rhea" id="RHEA-COMP:10495"/>
        <dbReference type="ChEBI" id="CHEBI:15378"/>
        <dbReference type="ChEBI" id="CHEBI:16526"/>
        <dbReference type="ChEBI" id="CHEBI:57305"/>
        <dbReference type="ChEBI" id="CHEBI:83099"/>
        <dbReference type="ChEBI" id="CHEBI:83143"/>
        <dbReference type="EC" id="1.4.4.2"/>
    </reaction>
</comment>
<comment type="cofactor">
    <cofactor evidence="1">
        <name>pyridoxal 5'-phosphate</name>
        <dbReference type="ChEBI" id="CHEBI:597326"/>
    </cofactor>
</comment>
<comment type="subunit">
    <text evidence="1">The glycine cleavage system is composed of four proteins: P, T, L and H.</text>
</comment>
<comment type="similarity">
    <text evidence="1">Belongs to the GcvP family.</text>
</comment>